<sequence>MSNSITKNLSKHKLVKDTLVLILAGGRGSRLHELTDKRAKPALYFGGNRRIIDFALSNCINSGLNRIGVVTQYAAHSLLRHLQKGWSFLPQERGEFIDMLPARQQIDDSTWYRGTADAVYQNMAIIRDHYRPKYILILAGDHIYKQDYSQMLLDHVSSNAKCTVGCIEVPREQASEFGVMAVDENLKVKAFVEKPKDPPAIPNKPDTSLASMGIYVFDADYLYDVLMREVNTPYTSHDFGKDILPKSLEEEVLYAHPFSRSCMGRNTDGEIYWRDVGTLDSFWQSNIDLVSEHPQLDIYDQRWPIRGNPTQTYPSKFFYNKQDIKPVDNSLISGGCVITDAEISYSVLFDQVKVKADSKVEYSVVLPQVTIGKNCILRNCIIDRQVVIPDNTVIGVNIEEDRKRFRVSSTGKVILVTESMMKKLNGEKVVSEIHLD</sequence>
<gene>
    <name evidence="1" type="primary">glgC</name>
    <name type="ordered locus">HSM_1366</name>
</gene>
<feature type="chain" id="PRO_1000082597" description="Glucose-1-phosphate adenylyltransferase">
    <location>
        <begin position="1"/>
        <end position="436"/>
    </location>
</feature>
<feature type="binding site" evidence="1">
    <location>
        <position position="112"/>
    </location>
    <ligand>
        <name>alpha-D-glucose 1-phosphate</name>
        <dbReference type="ChEBI" id="CHEBI:58601"/>
    </ligand>
</feature>
<feature type="binding site" evidence="1">
    <location>
        <position position="178"/>
    </location>
    <ligand>
        <name>alpha-D-glucose 1-phosphate</name>
        <dbReference type="ChEBI" id="CHEBI:58601"/>
    </ligand>
</feature>
<feature type="binding site" evidence="1">
    <location>
        <begin position="193"/>
        <end position="194"/>
    </location>
    <ligand>
        <name>alpha-D-glucose 1-phosphate</name>
        <dbReference type="ChEBI" id="CHEBI:58601"/>
    </ligand>
</feature>
<feature type="binding site" evidence="1">
    <location>
        <position position="211"/>
    </location>
    <ligand>
        <name>alpha-D-glucose 1-phosphate</name>
        <dbReference type="ChEBI" id="CHEBI:58601"/>
    </ligand>
</feature>
<keyword id="KW-0067">ATP-binding</keyword>
<keyword id="KW-0119">Carbohydrate metabolism</keyword>
<keyword id="KW-0320">Glycogen biosynthesis</keyword>
<keyword id="KW-0321">Glycogen metabolism</keyword>
<keyword id="KW-0547">Nucleotide-binding</keyword>
<keyword id="KW-0548">Nucleotidyltransferase</keyword>
<keyword id="KW-0808">Transferase</keyword>
<organism>
    <name type="scientific">Histophilus somni (strain 2336)</name>
    <name type="common">Haemophilus somnus</name>
    <dbReference type="NCBI Taxonomy" id="228400"/>
    <lineage>
        <taxon>Bacteria</taxon>
        <taxon>Pseudomonadati</taxon>
        <taxon>Pseudomonadota</taxon>
        <taxon>Gammaproteobacteria</taxon>
        <taxon>Pasteurellales</taxon>
        <taxon>Pasteurellaceae</taxon>
        <taxon>Histophilus</taxon>
    </lineage>
</organism>
<comment type="function">
    <text evidence="1">Involved in the biosynthesis of ADP-glucose, a building block required for the elongation reactions to produce glycogen. Catalyzes the reaction between ATP and alpha-D-glucose 1-phosphate (G1P) to produce pyrophosphate and ADP-Glc.</text>
</comment>
<comment type="catalytic activity">
    <reaction evidence="1">
        <text>alpha-D-glucose 1-phosphate + ATP + H(+) = ADP-alpha-D-glucose + diphosphate</text>
        <dbReference type="Rhea" id="RHEA:12120"/>
        <dbReference type="ChEBI" id="CHEBI:15378"/>
        <dbReference type="ChEBI" id="CHEBI:30616"/>
        <dbReference type="ChEBI" id="CHEBI:33019"/>
        <dbReference type="ChEBI" id="CHEBI:57498"/>
        <dbReference type="ChEBI" id="CHEBI:58601"/>
        <dbReference type="EC" id="2.7.7.27"/>
    </reaction>
</comment>
<comment type="pathway">
    <text evidence="1">Glycan biosynthesis; glycogen biosynthesis.</text>
</comment>
<comment type="subunit">
    <text evidence="1">Homotetramer.</text>
</comment>
<comment type="similarity">
    <text evidence="1">Belongs to the bacterial/plant glucose-1-phosphate adenylyltransferase family.</text>
</comment>
<evidence type="ECO:0000255" key="1">
    <source>
        <dbReference type="HAMAP-Rule" id="MF_00624"/>
    </source>
</evidence>
<dbReference type="EC" id="2.7.7.27" evidence="1"/>
<dbReference type="EMBL" id="CP000947">
    <property type="protein sequence ID" value="ACA31103.1"/>
    <property type="molecule type" value="Genomic_DNA"/>
</dbReference>
<dbReference type="RefSeq" id="WP_011609040.1">
    <property type="nucleotide sequence ID" value="NC_010519.1"/>
</dbReference>
<dbReference type="SMR" id="B0UU87"/>
<dbReference type="STRING" id="228400.HSM_1366"/>
<dbReference type="GeneID" id="31487664"/>
<dbReference type="KEGG" id="hsm:HSM_1366"/>
<dbReference type="HOGENOM" id="CLU_029499_14_1_6"/>
<dbReference type="UniPathway" id="UPA00164"/>
<dbReference type="GO" id="GO:0005524">
    <property type="term" value="F:ATP binding"/>
    <property type="evidence" value="ECO:0007669"/>
    <property type="project" value="UniProtKB-KW"/>
</dbReference>
<dbReference type="GO" id="GO:0008878">
    <property type="term" value="F:glucose-1-phosphate adenylyltransferase activity"/>
    <property type="evidence" value="ECO:0007669"/>
    <property type="project" value="UniProtKB-UniRule"/>
</dbReference>
<dbReference type="GO" id="GO:0005978">
    <property type="term" value="P:glycogen biosynthetic process"/>
    <property type="evidence" value="ECO:0007669"/>
    <property type="project" value="UniProtKB-UniRule"/>
</dbReference>
<dbReference type="CDD" id="cd02508">
    <property type="entry name" value="ADP_Glucose_PP"/>
    <property type="match status" value="1"/>
</dbReference>
<dbReference type="CDD" id="cd04651">
    <property type="entry name" value="LbH_G1P_AT_C"/>
    <property type="match status" value="1"/>
</dbReference>
<dbReference type="Gene3D" id="2.160.10.10">
    <property type="entry name" value="Hexapeptide repeat proteins"/>
    <property type="match status" value="1"/>
</dbReference>
<dbReference type="Gene3D" id="3.90.550.10">
    <property type="entry name" value="Spore Coat Polysaccharide Biosynthesis Protein SpsA, Chain A"/>
    <property type="match status" value="1"/>
</dbReference>
<dbReference type="HAMAP" id="MF_00624">
    <property type="entry name" value="GlgC"/>
    <property type="match status" value="1"/>
</dbReference>
<dbReference type="InterPro" id="IPR011831">
    <property type="entry name" value="ADP-Glc_PPase"/>
</dbReference>
<dbReference type="InterPro" id="IPR005836">
    <property type="entry name" value="ADP_Glu_pyroP_CS"/>
</dbReference>
<dbReference type="InterPro" id="IPR023049">
    <property type="entry name" value="GlgC_bac"/>
</dbReference>
<dbReference type="InterPro" id="IPR056818">
    <property type="entry name" value="GlmU/GlgC-like_hexapep"/>
</dbReference>
<dbReference type="InterPro" id="IPR005835">
    <property type="entry name" value="NTP_transferase_dom"/>
</dbReference>
<dbReference type="InterPro" id="IPR029044">
    <property type="entry name" value="Nucleotide-diphossugar_trans"/>
</dbReference>
<dbReference type="InterPro" id="IPR011004">
    <property type="entry name" value="Trimer_LpxA-like_sf"/>
</dbReference>
<dbReference type="NCBIfam" id="TIGR02091">
    <property type="entry name" value="glgC"/>
    <property type="match status" value="1"/>
</dbReference>
<dbReference type="NCBIfam" id="NF001947">
    <property type="entry name" value="PRK00725.1"/>
    <property type="match status" value="1"/>
</dbReference>
<dbReference type="NCBIfam" id="NF002023">
    <property type="entry name" value="PRK00844.1"/>
    <property type="match status" value="1"/>
</dbReference>
<dbReference type="PANTHER" id="PTHR43523:SF2">
    <property type="entry name" value="GLUCOSE-1-PHOSPHATE ADENYLYLTRANSFERASE"/>
    <property type="match status" value="1"/>
</dbReference>
<dbReference type="PANTHER" id="PTHR43523">
    <property type="entry name" value="GLUCOSE-1-PHOSPHATE ADENYLYLTRANSFERASE-RELATED"/>
    <property type="match status" value="1"/>
</dbReference>
<dbReference type="Pfam" id="PF24894">
    <property type="entry name" value="Hexapep_GlmU"/>
    <property type="match status" value="1"/>
</dbReference>
<dbReference type="Pfam" id="PF00483">
    <property type="entry name" value="NTP_transferase"/>
    <property type="match status" value="1"/>
</dbReference>
<dbReference type="SUPFAM" id="SSF53448">
    <property type="entry name" value="Nucleotide-diphospho-sugar transferases"/>
    <property type="match status" value="1"/>
</dbReference>
<dbReference type="SUPFAM" id="SSF51161">
    <property type="entry name" value="Trimeric LpxA-like enzymes"/>
    <property type="match status" value="1"/>
</dbReference>
<dbReference type="PROSITE" id="PS00808">
    <property type="entry name" value="ADP_GLC_PYROPHOSPH_1"/>
    <property type="match status" value="1"/>
</dbReference>
<dbReference type="PROSITE" id="PS00809">
    <property type="entry name" value="ADP_GLC_PYROPHOSPH_2"/>
    <property type="match status" value="1"/>
</dbReference>
<dbReference type="PROSITE" id="PS00810">
    <property type="entry name" value="ADP_GLC_PYROPHOSPH_3"/>
    <property type="match status" value="1"/>
</dbReference>
<name>GLGC_HISS2</name>
<accession>B0UU87</accession>
<protein>
    <recommendedName>
        <fullName evidence="1">Glucose-1-phosphate adenylyltransferase</fullName>
        <ecNumber evidence="1">2.7.7.27</ecNumber>
    </recommendedName>
    <alternativeName>
        <fullName evidence="1">ADP-glucose pyrophosphorylase</fullName>
        <shortName evidence="1">ADPGlc PPase</shortName>
    </alternativeName>
    <alternativeName>
        <fullName evidence="1">ADP-glucose synthase</fullName>
    </alternativeName>
</protein>
<reference key="1">
    <citation type="submission" date="2008-02" db="EMBL/GenBank/DDBJ databases">
        <title>Complete sequence of Haemophilus somnus 2336.</title>
        <authorList>
            <consortium name="US DOE Joint Genome Institute"/>
            <person name="Siddaramappa S."/>
            <person name="Duncan A.J."/>
            <person name="Challacombe J.F."/>
            <person name="Rainey D."/>
            <person name="Gillaspy A.F."/>
            <person name="Carson M."/>
            <person name="Gipson J."/>
            <person name="Gipson M."/>
            <person name="Bruce D."/>
            <person name="Detter J.C."/>
            <person name="Han C.S."/>
            <person name="Land M."/>
            <person name="Tapia R."/>
            <person name="Thompson L.S."/>
            <person name="Orvis J."/>
            <person name="Zaitshik J."/>
            <person name="Barnes G."/>
            <person name="Brettin T.S."/>
            <person name="Dyer D.W."/>
            <person name="Inzana T.J."/>
        </authorList>
    </citation>
    <scope>NUCLEOTIDE SEQUENCE [LARGE SCALE GENOMIC DNA]</scope>
    <source>
        <strain>2336</strain>
    </source>
</reference>
<proteinExistence type="inferred from homology"/>